<dbReference type="EMBL" id="CP000580">
    <property type="protein sequence ID" value="ABN99780.1"/>
    <property type="molecule type" value="Genomic_DNA"/>
</dbReference>
<dbReference type="SMR" id="A3Q3Q3"/>
<dbReference type="KEGG" id="mjl:Mjls_4005"/>
<dbReference type="HOGENOM" id="CLU_086034_2_0_11"/>
<dbReference type="BioCyc" id="MSP164757:G1G8C-4046-MONOMER"/>
<dbReference type="GO" id="GO:0033281">
    <property type="term" value="C:TAT protein transport complex"/>
    <property type="evidence" value="ECO:0007669"/>
    <property type="project" value="UniProtKB-UniRule"/>
</dbReference>
<dbReference type="GO" id="GO:0008320">
    <property type="term" value="F:protein transmembrane transporter activity"/>
    <property type="evidence" value="ECO:0007669"/>
    <property type="project" value="UniProtKB-UniRule"/>
</dbReference>
<dbReference type="GO" id="GO:0043953">
    <property type="term" value="P:protein transport by the Tat complex"/>
    <property type="evidence" value="ECO:0007669"/>
    <property type="project" value="UniProtKB-UniRule"/>
</dbReference>
<dbReference type="Gene3D" id="1.20.5.3310">
    <property type="match status" value="1"/>
</dbReference>
<dbReference type="HAMAP" id="MF_00237">
    <property type="entry name" value="TatB"/>
    <property type="match status" value="1"/>
</dbReference>
<dbReference type="InterPro" id="IPR018448">
    <property type="entry name" value="TatB"/>
</dbReference>
<dbReference type="NCBIfam" id="TIGR01410">
    <property type="entry name" value="tatB"/>
    <property type="match status" value="1"/>
</dbReference>
<dbReference type="PRINTS" id="PR01506">
    <property type="entry name" value="TATBPROTEIN"/>
</dbReference>
<protein>
    <recommendedName>
        <fullName evidence="1">Sec-independent protein translocase protein TatB</fullName>
    </recommendedName>
</protein>
<sequence length="137" mass="14880">MFANIGWGEMLILVIAGLVILGPERLPGAIRWTSNALRQARDYVSGATTQLRQDFGPEFEDLREPITELQKLRGMTPRAALTKHLLDGDDSFFTGKFDQQNGKPAAGQEKPVTPVNPPVTATPPSESTATPFDSDAT</sequence>
<name>TATB_MYCSJ</name>
<accession>A3Q3Q3</accession>
<organism>
    <name type="scientific">Mycobacterium sp. (strain JLS)</name>
    <dbReference type="NCBI Taxonomy" id="164757"/>
    <lineage>
        <taxon>Bacteria</taxon>
        <taxon>Bacillati</taxon>
        <taxon>Actinomycetota</taxon>
        <taxon>Actinomycetes</taxon>
        <taxon>Mycobacteriales</taxon>
        <taxon>Mycobacteriaceae</taxon>
        <taxon>Mycobacterium</taxon>
    </lineage>
</organism>
<evidence type="ECO:0000255" key="1">
    <source>
        <dbReference type="HAMAP-Rule" id="MF_00237"/>
    </source>
</evidence>
<evidence type="ECO:0000256" key="2">
    <source>
        <dbReference type="SAM" id="MobiDB-lite"/>
    </source>
</evidence>
<comment type="function">
    <text evidence="1">Part of the twin-arginine translocation (Tat) system that transports large folded proteins containing a characteristic twin-arginine motif in their signal peptide across membranes. Together with TatC, TatB is part of a receptor directly interacting with Tat signal peptides. TatB may form an oligomeric binding site that transiently accommodates folded Tat precursor proteins before their translocation.</text>
</comment>
<comment type="subunit">
    <text evidence="1">The Tat system comprises two distinct complexes: a TatABC complex, containing multiple copies of TatA, TatB and TatC subunits, and a separate TatA complex, containing only TatA subunits. Substrates initially bind to the TatABC complex, which probably triggers association of the separate TatA complex to form the active translocon.</text>
</comment>
<comment type="subcellular location">
    <subcellularLocation>
        <location evidence="1">Cell membrane</location>
        <topology evidence="1">Single-pass membrane protein</topology>
    </subcellularLocation>
</comment>
<comment type="similarity">
    <text evidence="1">Belongs to the TatB family.</text>
</comment>
<feature type="chain" id="PRO_0000301189" description="Sec-independent protein translocase protein TatB">
    <location>
        <begin position="1"/>
        <end position="137"/>
    </location>
</feature>
<feature type="transmembrane region" description="Helical" evidence="1">
    <location>
        <begin position="2"/>
        <end position="22"/>
    </location>
</feature>
<feature type="region of interest" description="Disordered" evidence="2">
    <location>
        <begin position="92"/>
        <end position="137"/>
    </location>
</feature>
<feature type="compositionally biased region" description="Low complexity" evidence="2">
    <location>
        <begin position="122"/>
        <end position="131"/>
    </location>
</feature>
<keyword id="KW-1003">Cell membrane</keyword>
<keyword id="KW-0472">Membrane</keyword>
<keyword id="KW-0653">Protein transport</keyword>
<keyword id="KW-0811">Translocation</keyword>
<keyword id="KW-0812">Transmembrane</keyword>
<keyword id="KW-1133">Transmembrane helix</keyword>
<keyword id="KW-0813">Transport</keyword>
<gene>
    <name evidence="1" type="primary">tatB</name>
    <name type="ordered locus">Mjls_4005</name>
</gene>
<proteinExistence type="inferred from homology"/>
<reference key="1">
    <citation type="submission" date="2007-02" db="EMBL/GenBank/DDBJ databases">
        <title>Complete sequence of Mycobacterium sp. JLS.</title>
        <authorList>
            <consortium name="US DOE Joint Genome Institute"/>
            <person name="Copeland A."/>
            <person name="Lucas S."/>
            <person name="Lapidus A."/>
            <person name="Barry K."/>
            <person name="Detter J.C."/>
            <person name="Glavina del Rio T."/>
            <person name="Hammon N."/>
            <person name="Israni S."/>
            <person name="Dalin E."/>
            <person name="Tice H."/>
            <person name="Pitluck S."/>
            <person name="Chain P."/>
            <person name="Malfatti S."/>
            <person name="Shin M."/>
            <person name="Vergez L."/>
            <person name="Schmutz J."/>
            <person name="Larimer F."/>
            <person name="Land M."/>
            <person name="Hauser L."/>
            <person name="Kyrpides N."/>
            <person name="Mikhailova N."/>
            <person name="Miller C.D."/>
            <person name="Anderson A.J."/>
            <person name="Sims R.C."/>
            <person name="Richardson P."/>
        </authorList>
    </citation>
    <scope>NUCLEOTIDE SEQUENCE [LARGE SCALE GENOMIC DNA]</scope>
    <source>
        <strain>JLS</strain>
    </source>
</reference>